<gene>
    <name evidence="1" type="primary">L3</name>
</gene>
<accession>Q5TJ03</accession>
<organism>
    <name type="scientific">Human adenovirus D serotype 9</name>
    <name type="common">HAdV-9</name>
    <name type="synonym">Human adenovirus 9</name>
    <dbReference type="NCBI Taxonomy" id="10527"/>
    <lineage>
        <taxon>Viruses</taxon>
        <taxon>Varidnaviria</taxon>
        <taxon>Bamfordvirae</taxon>
        <taxon>Preplasmiviricota</taxon>
        <taxon>Tectiliviricetes</taxon>
        <taxon>Rowavirales</taxon>
        <taxon>Adenoviridae</taxon>
        <taxon>Mastadenovirus</taxon>
        <taxon>Human mastadenovirus D</taxon>
    </lineage>
</organism>
<evidence type="ECO:0000255" key="1">
    <source>
        <dbReference type="HAMAP-Rule" id="MF_04059"/>
    </source>
</evidence>
<feature type="chain" id="PRO_0000218027" description="Protease">
    <location>
        <begin position="1"/>
        <end position="209"/>
    </location>
</feature>
<feature type="active site" evidence="1">
    <location>
        <position position="55"/>
    </location>
</feature>
<feature type="active site" evidence="1">
    <location>
        <position position="72"/>
    </location>
</feature>
<feature type="active site" evidence="1">
    <location>
        <position position="123"/>
    </location>
</feature>
<feature type="site" description="Cleavage; by autolysis" evidence="1">
    <location>
        <begin position="52"/>
        <end position="53"/>
    </location>
</feature>
<feature type="disulfide bond" description="Interchain (with C-10 in cleaved protease cofactor pVI-C)" evidence="1">
    <location>
        <position position="105"/>
    </location>
</feature>
<proteinExistence type="inferred from homology"/>
<organismHost>
    <name type="scientific">Homo sapiens</name>
    <name type="common">Human</name>
    <dbReference type="NCBI Taxonomy" id="9606"/>
</organismHost>
<comment type="function">
    <text evidence="1">Cleaves viral precursor proteins (pTP, pIIIa, pVI, pVII, pVIII, and pX) inside newly assembled particles giving rise to mature virions. Protease complexed to its cofactor slides along the viral DNA to specifically locate and cleave the viral precursors. Mature virions have a weakened organization compared to the unmature virions, thereby facilitating subsequent uncoating. Without maturation, the particle lacks infectivity and is unable to uncoat. Late in adenovirus infection, in the cytoplasm, may participate in the cytoskeleton destruction. Cleaves host cell cytoskeletal keratins K7 and K18.</text>
</comment>
<comment type="catalytic activity">
    <reaction evidence="1">
        <text>Cleaves proteins of the adenovirus and its host cell at two consensus sites: -Yaa-Xaa-Gly-Gly-|-Xaa- and -Yaa-Xaa-Gly-Xaa-|-Gly- (in which Yaa is Met, Ile or Leu, and Xaa is any amino acid).</text>
        <dbReference type="EC" id="3.4.22.39"/>
    </reaction>
</comment>
<comment type="activity regulation">
    <text evidence="1">Requires DNA and protease cofactor for maximal activation. Inside nascent virions, becomes partially activated by binding to the viral DNA, allowing it to cleave the cofactor that binds to the protease and fully activates it. Actin, like the viral protease cofactor, seems to act as a cofactor in the cleavage of cytokeratin 18 and of actin itself.</text>
</comment>
<comment type="subunit">
    <text evidence="1">Interacts with protease cofactor pVI-C; this interaction is necessary for protease activation.</text>
</comment>
<comment type="subcellular location">
    <subcellularLocation>
        <location evidence="1">Virion</location>
    </subcellularLocation>
    <subcellularLocation>
        <location evidence="1">Host nucleus</location>
    </subcellularLocation>
    <text evidence="1">Present in about 10 copies per virion.</text>
</comment>
<comment type="induction">
    <text evidence="1">Expressed in the late phase of the viral replicative cycle.</text>
</comment>
<comment type="miscellaneous">
    <text evidence="1">All late proteins expressed from the major late promoter are produced by alternative splicing and alternative polyadenylation of the same gene giving rise to non-overlapping ORFs. A leader sequence is present in the N-terminus of all these mRNAs and is recognized by the viral shutoff protein to provide expression although conventional translation via ribosome scanning from the cap has been shut off in the host cell.</text>
</comment>
<comment type="similarity">
    <text evidence="1">Belongs to the peptidase C5 family.</text>
</comment>
<name>PRO_ADE09</name>
<protein>
    <recommendedName>
        <fullName evidence="1">Protease</fullName>
        <ecNumber evidence="1">3.4.22.39</ecNumber>
    </recommendedName>
    <alternativeName>
        <fullName evidence="1">Adenain</fullName>
    </alternativeName>
    <alternativeName>
        <fullName evidence="1">Adenovirus protease</fullName>
        <shortName evidence="1">AVP</shortName>
    </alternativeName>
    <alternativeName>
        <fullName evidence="1">Adenovirus proteinase</fullName>
    </alternativeName>
    <alternativeName>
        <fullName evidence="1">Endoprotease</fullName>
    </alternativeName>
</protein>
<sequence length="209" mass="23588">MSGSSERELAAIVRDLGCGPYFLGTHDKRFPGFLAGDKLACAIVNTAGRETGGVHWLAFGWNPRSRTCYMFDPFGFSDRRLKQIYSFEYEAMLRRSALASSPDRCLSLEQSTQTVQGPDSAACGLFCCMFLHAFVHWPDRPMDGNPTMNLLTGVPNGMLQSPQVLPTLRRNQEELYRFLARHSPYFRSHRAAIEHATAFDKMKQLRVSQ</sequence>
<keyword id="KW-0068">Autocatalytic cleavage</keyword>
<keyword id="KW-1015">Disulfide bond</keyword>
<keyword id="KW-0238">DNA-binding</keyword>
<keyword id="KW-1048">Host nucleus</keyword>
<keyword id="KW-0378">Hydrolase</keyword>
<keyword id="KW-0426">Late protein</keyword>
<keyword id="KW-0645">Protease</keyword>
<keyword id="KW-0788">Thiol protease</keyword>
<keyword id="KW-0946">Virion</keyword>
<reference key="1">
    <citation type="submission" date="2004-11" db="EMBL/GenBank/DDBJ databases">
        <title>Adenovirus type 9, complete sequence.</title>
        <authorList>
            <person name="Buettner W.H."/>
            <person name="Veres-Molnar S.K."/>
        </authorList>
    </citation>
    <scope>NUCLEOTIDE SEQUENCE [LARGE SCALE GENOMIC DNA]</scope>
    <source>
        <strain>Isolate ATCC VR-1086 / Hicks / V-209-003-014</strain>
    </source>
</reference>
<dbReference type="EC" id="3.4.22.39" evidence="1"/>
<dbReference type="EMBL" id="AJ854486">
    <property type="protein sequence ID" value="CAI05970.1"/>
    <property type="molecule type" value="Genomic_DNA"/>
</dbReference>
<dbReference type="SMR" id="Q5TJ03"/>
<dbReference type="MEROPS" id="C05.001"/>
<dbReference type="Proteomes" id="UP000118285">
    <property type="component" value="Genome"/>
</dbReference>
<dbReference type="GO" id="GO:0042025">
    <property type="term" value="C:host cell nucleus"/>
    <property type="evidence" value="ECO:0007669"/>
    <property type="project" value="UniProtKB-SubCell"/>
</dbReference>
<dbReference type="GO" id="GO:0044423">
    <property type="term" value="C:virion component"/>
    <property type="evidence" value="ECO:0007669"/>
    <property type="project" value="UniProtKB-UniRule"/>
</dbReference>
<dbReference type="GO" id="GO:0004197">
    <property type="term" value="F:cysteine-type endopeptidase activity"/>
    <property type="evidence" value="ECO:0007669"/>
    <property type="project" value="UniProtKB-UniRule"/>
</dbReference>
<dbReference type="GO" id="GO:0003677">
    <property type="term" value="F:DNA binding"/>
    <property type="evidence" value="ECO:0007669"/>
    <property type="project" value="UniProtKB-UniRule"/>
</dbReference>
<dbReference type="GO" id="GO:0006508">
    <property type="term" value="P:proteolysis"/>
    <property type="evidence" value="ECO:0007669"/>
    <property type="project" value="UniProtKB-KW"/>
</dbReference>
<dbReference type="Gene3D" id="3.40.395.10">
    <property type="entry name" value="Adenoviral Proteinase, Chain A"/>
    <property type="match status" value="1"/>
</dbReference>
<dbReference type="HAMAP" id="MF_04059">
    <property type="entry name" value="ADV_PRO"/>
    <property type="match status" value="1"/>
</dbReference>
<dbReference type="InterPro" id="IPR038765">
    <property type="entry name" value="Papain-like_cys_pep_sf"/>
</dbReference>
<dbReference type="InterPro" id="IPR000855">
    <property type="entry name" value="Peptidase_C5"/>
</dbReference>
<dbReference type="Pfam" id="PF00770">
    <property type="entry name" value="Peptidase_C5"/>
    <property type="match status" value="1"/>
</dbReference>
<dbReference type="PIRSF" id="PIRSF001218">
    <property type="entry name" value="Protease_ADV"/>
    <property type="match status" value="1"/>
</dbReference>
<dbReference type="PRINTS" id="PR00703">
    <property type="entry name" value="ADVENDOPTASE"/>
</dbReference>
<dbReference type="SUPFAM" id="SSF54001">
    <property type="entry name" value="Cysteine proteinases"/>
    <property type="match status" value="1"/>
</dbReference>